<sequence>MEIRIFQQDDFEEVILLWEHCDLLRPWNDPEMDIERKLNHDPELFLVAEVNGTIVGSVMGGYDGHRGSAYYLGVHPDYRGRGFANALISRLEKKLIARGCPKLNIMVREDNDAVIGMYEKLDYETQDTIMLGKRLIVDQEY</sequence>
<feature type="chain" id="PRO_0000298452" description="Acetyltransferase YPN_1354">
    <location>
        <begin position="1"/>
        <end position="141"/>
    </location>
</feature>
<feature type="domain" description="N-acetyltransferase" evidence="1">
    <location>
        <begin position="1"/>
        <end position="141"/>
    </location>
</feature>
<reference key="1">
    <citation type="journal article" date="2006" name="J. Bacteriol.">
        <title>Complete genome sequence of Yersinia pestis strains Antiqua and Nepal516: evidence of gene reduction in an emerging pathogen.</title>
        <authorList>
            <person name="Chain P.S.G."/>
            <person name="Hu P."/>
            <person name="Malfatti S.A."/>
            <person name="Radnedge L."/>
            <person name="Larimer F."/>
            <person name="Vergez L.M."/>
            <person name="Worsham P."/>
            <person name="Chu M.C."/>
            <person name="Andersen G.L."/>
        </authorList>
    </citation>
    <scope>NUCLEOTIDE SEQUENCE [LARGE SCALE GENOMIC DNA]</scope>
    <source>
        <strain>Nepal516</strain>
    </source>
</reference>
<reference key="2">
    <citation type="submission" date="2009-04" db="EMBL/GenBank/DDBJ databases">
        <title>Yersinia pestis Nepal516A whole genome shotgun sequencing project.</title>
        <authorList>
            <person name="Plunkett G. III"/>
            <person name="Anderson B.D."/>
            <person name="Baumler D.J."/>
            <person name="Burland V."/>
            <person name="Cabot E.L."/>
            <person name="Glasner J.D."/>
            <person name="Mau B."/>
            <person name="Neeno-Eckwall E."/>
            <person name="Perna N.T."/>
            <person name="Munk A.C."/>
            <person name="Tapia R."/>
            <person name="Green L.D."/>
            <person name="Rogers Y.C."/>
            <person name="Detter J.C."/>
            <person name="Bruce D.C."/>
            <person name="Brettin T.S."/>
        </authorList>
    </citation>
    <scope>NUCLEOTIDE SEQUENCE [LARGE SCALE GENOMIC DNA]</scope>
    <source>
        <strain>Nepal516</strain>
    </source>
</reference>
<accession>Q1CJZ6</accession>
<accession>C4GRW4</accession>
<organism>
    <name type="scientific">Yersinia pestis bv. Antiqua (strain Nepal516)</name>
    <dbReference type="NCBI Taxonomy" id="377628"/>
    <lineage>
        <taxon>Bacteria</taxon>
        <taxon>Pseudomonadati</taxon>
        <taxon>Pseudomonadota</taxon>
        <taxon>Gammaproteobacteria</taxon>
        <taxon>Enterobacterales</taxon>
        <taxon>Yersiniaceae</taxon>
        <taxon>Yersinia</taxon>
    </lineage>
</organism>
<evidence type="ECO:0000255" key="1">
    <source>
        <dbReference type="HAMAP-Rule" id="MF_01127"/>
    </source>
</evidence>
<gene>
    <name type="ordered locus">YPN_1354</name>
    <name type="ORF">YP516_1492</name>
</gene>
<comment type="similarity">
    <text evidence="1">Belongs to the acetyltransferase family. YpeA subfamily.</text>
</comment>
<proteinExistence type="inferred from homology"/>
<keyword id="KW-0012">Acyltransferase</keyword>
<keyword id="KW-0808">Transferase</keyword>
<name>Y1354_YERPN</name>
<protein>
    <recommendedName>
        <fullName evidence="1">Acetyltransferase YPN_1354</fullName>
        <ecNumber evidence="1">2.3.1.-</ecNumber>
    </recommendedName>
</protein>
<dbReference type="EC" id="2.3.1.-" evidence="1"/>
<dbReference type="EMBL" id="CP000305">
    <property type="protein sequence ID" value="ABG17684.1"/>
    <property type="molecule type" value="Genomic_DNA"/>
</dbReference>
<dbReference type="EMBL" id="ACNQ01000008">
    <property type="protein sequence ID" value="EEO77805.1"/>
    <property type="molecule type" value="Genomic_DNA"/>
</dbReference>
<dbReference type="RefSeq" id="WP_002208525.1">
    <property type="nucleotide sequence ID" value="NZ_ACNQ01000008.1"/>
</dbReference>
<dbReference type="SMR" id="Q1CJZ6"/>
<dbReference type="KEGG" id="ypn:YPN_1354"/>
<dbReference type="HOGENOM" id="CLU_013985_34_1_6"/>
<dbReference type="Proteomes" id="UP000008936">
    <property type="component" value="Chromosome"/>
</dbReference>
<dbReference type="GO" id="GO:0016747">
    <property type="term" value="F:acyltransferase activity, transferring groups other than amino-acyl groups"/>
    <property type="evidence" value="ECO:0007669"/>
    <property type="project" value="UniProtKB-UniRule"/>
</dbReference>
<dbReference type="CDD" id="cd04301">
    <property type="entry name" value="NAT_SF"/>
    <property type="match status" value="1"/>
</dbReference>
<dbReference type="Gene3D" id="3.40.630.30">
    <property type="match status" value="1"/>
</dbReference>
<dbReference type="HAMAP" id="MF_01127">
    <property type="entry name" value="Acetyltransf_YpeA"/>
    <property type="match status" value="1"/>
</dbReference>
<dbReference type="InterPro" id="IPR023072">
    <property type="entry name" value="Acetyltransferase_YpeA"/>
</dbReference>
<dbReference type="InterPro" id="IPR016181">
    <property type="entry name" value="Acyl_CoA_acyltransferase"/>
</dbReference>
<dbReference type="InterPro" id="IPR000182">
    <property type="entry name" value="GNAT_dom"/>
</dbReference>
<dbReference type="NCBIfam" id="NF002959">
    <property type="entry name" value="PRK03624.1"/>
    <property type="match status" value="1"/>
</dbReference>
<dbReference type="PANTHER" id="PTHR43072:SF51">
    <property type="entry name" value="ABC SUPERFAMILY TRANSPORT PROTEIN"/>
    <property type="match status" value="1"/>
</dbReference>
<dbReference type="PANTHER" id="PTHR43072">
    <property type="entry name" value="N-ACETYLTRANSFERASE"/>
    <property type="match status" value="1"/>
</dbReference>
<dbReference type="Pfam" id="PF00583">
    <property type="entry name" value="Acetyltransf_1"/>
    <property type="match status" value="1"/>
</dbReference>
<dbReference type="SUPFAM" id="SSF55729">
    <property type="entry name" value="Acyl-CoA N-acyltransferases (Nat)"/>
    <property type="match status" value="1"/>
</dbReference>
<dbReference type="PROSITE" id="PS51186">
    <property type="entry name" value="GNAT"/>
    <property type="match status" value="1"/>
</dbReference>